<keyword id="KW-0175">Coiled coil</keyword>
<keyword id="KW-0963">Cytoplasm</keyword>
<keyword id="KW-0967">Endosome</keyword>
<keyword id="KW-0472">Membrane</keyword>
<keyword id="KW-0653">Protein transport</keyword>
<keyword id="KW-1185">Reference proteome</keyword>
<keyword id="KW-0813">Transport</keyword>
<comment type="function">
    <text evidence="1">Involved in ESCRT-dependent multivesicular body (MVB) formation and sorting of endosomal cargo proteins into MVBs.</text>
</comment>
<comment type="subcellular location">
    <subcellularLocation>
        <location evidence="2">Cytoplasm</location>
    </subcellularLocation>
    <subcellularLocation>
        <location evidence="2">Endosome membrane</location>
        <topology evidence="2">Peripheral membrane protein</topology>
    </subcellularLocation>
</comment>
<comment type="similarity">
    <text evidence="3">Belongs to the SNF7 family.</text>
</comment>
<accession>Q84VG1</accession>
<accession>A0A0P0WZP2</accession>
<name>CHMP1_ORYSJ</name>
<proteinExistence type="evidence at transcript level"/>
<protein>
    <recommendedName>
        <fullName evidence="4">ESCRT-related protein CHMP1</fullName>
    </recommendedName>
    <alternativeName>
        <fullName evidence="4">Protein CHARGED MULTIVESICULAR BODY PROTEIN 1</fullName>
    </alternativeName>
    <alternativeName>
        <fullName evidence="4">Protein CHROMATIN MODIFYING PROTEIN 1</fullName>
    </alternativeName>
</protein>
<feature type="chain" id="PRO_0000433028" description="ESCRT-related protein CHMP1">
    <location>
        <begin position="1"/>
        <end position="205"/>
    </location>
</feature>
<feature type="coiled-coil region" evidence="3">
    <location>
        <begin position="13"/>
        <end position="51"/>
    </location>
</feature>
<feature type="coiled-coil region" evidence="3">
    <location>
        <begin position="109"/>
        <end position="140"/>
    </location>
</feature>
<dbReference type="EMBL" id="AY224520">
    <property type="protein sequence ID" value="AAO72640.1"/>
    <property type="molecule type" value="mRNA"/>
</dbReference>
<dbReference type="EMBL" id="AP003523">
    <property type="protein sequence ID" value="BAD37367.1"/>
    <property type="molecule type" value="Genomic_DNA"/>
</dbReference>
<dbReference type="EMBL" id="AP008212">
    <property type="protein sequence ID" value="BAF20091.1"/>
    <property type="molecule type" value="Genomic_DNA"/>
</dbReference>
<dbReference type="EMBL" id="AP014962">
    <property type="protein sequence ID" value="BAS98829.1"/>
    <property type="molecule type" value="Genomic_DNA"/>
</dbReference>
<dbReference type="EMBL" id="CM000143">
    <property type="protein sequence ID" value="EAZ37793.1"/>
    <property type="molecule type" value="Genomic_DNA"/>
</dbReference>
<dbReference type="EMBL" id="AK061733">
    <property type="protein sequence ID" value="BAG88077.1"/>
    <property type="molecule type" value="mRNA"/>
</dbReference>
<dbReference type="EMBL" id="AK099061">
    <property type="protein sequence ID" value="BAG93901.1"/>
    <property type="molecule type" value="mRNA"/>
</dbReference>
<dbReference type="EMBL" id="AK104266">
    <property type="protein sequence ID" value="BAG96557.1"/>
    <property type="molecule type" value="mRNA"/>
</dbReference>
<dbReference type="RefSeq" id="XP_015643810.1">
    <property type="nucleotide sequence ID" value="XM_015788324.1"/>
</dbReference>
<dbReference type="SMR" id="Q84VG1"/>
<dbReference type="FunCoup" id="Q84VG1">
    <property type="interactions" value="2804"/>
</dbReference>
<dbReference type="STRING" id="39947.Q84VG1"/>
<dbReference type="PaxDb" id="39947-Q84VG1"/>
<dbReference type="EnsemblPlants" id="Os06t0643300-01">
    <property type="protein sequence ID" value="Os06t0643300-01"/>
    <property type="gene ID" value="Os06g0643300"/>
</dbReference>
<dbReference type="EnsemblPlants" id="Os06t0643300-02">
    <property type="protein sequence ID" value="Os06t0643300-02"/>
    <property type="gene ID" value="Os06g0643300"/>
</dbReference>
<dbReference type="Gramene" id="Os06t0643300-01">
    <property type="protein sequence ID" value="Os06t0643300-01"/>
    <property type="gene ID" value="Os06g0643300"/>
</dbReference>
<dbReference type="Gramene" id="Os06t0643300-02">
    <property type="protein sequence ID" value="Os06t0643300-02"/>
    <property type="gene ID" value="Os06g0643300"/>
</dbReference>
<dbReference type="KEGG" id="dosa:Os06g0643300"/>
<dbReference type="eggNOG" id="KOG3232">
    <property type="taxonomic scope" value="Eukaryota"/>
</dbReference>
<dbReference type="HOGENOM" id="CLU_080826_0_1_1"/>
<dbReference type="InParanoid" id="Q84VG1"/>
<dbReference type="OMA" id="QQITMVM"/>
<dbReference type="OrthoDB" id="10266568at2759"/>
<dbReference type="Proteomes" id="UP000000763">
    <property type="component" value="Chromosome 6"/>
</dbReference>
<dbReference type="Proteomes" id="UP000007752">
    <property type="component" value="Chromosome 6"/>
</dbReference>
<dbReference type="Proteomes" id="UP000059680">
    <property type="component" value="Chromosome 6"/>
</dbReference>
<dbReference type="GO" id="GO:0000815">
    <property type="term" value="C:ESCRT III complex"/>
    <property type="evidence" value="ECO:0000318"/>
    <property type="project" value="GO_Central"/>
</dbReference>
<dbReference type="GO" id="GO:0005771">
    <property type="term" value="C:multivesicular body"/>
    <property type="evidence" value="ECO:0000318"/>
    <property type="project" value="GO_Central"/>
</dbReference>
<dbReference type="GO" id="GO:0032509">
    <property type="term" value="P:endosome transport via multivesicular body sorting pathway"/>
    <property type="evidence" value="ECO:0000318"/>
    <property type="project" value="GO_Central"/>
</dbReference>
<dbReference type="GO" id="GO:0045324">
    <property type="term" value="P:late endosome to vacuole transport"/>
    <property type="evidence" value="ECO:0000318"/>
    <property type="project" value="GO_Central"/>
</dbReference>
<dbReference type="GO" id="GO:0015031">
    <property type="term" value="P:protein transport"/>
    <property type="evidence" value="ECO:0000318"/>
    <property type="project" value="GO_Central"/>
</dbReference>
<dbReference type="Gene3D" id="6.10.140.1230">
    <property type="match status" value="1"/>
</dbReference>
<dbReference type="InterPro" id="IPR005024">
    <property type="entry name" value="Snf7_fam"/>
</dbReference>
<dbReference type="PANTHER" id="PTHR10476">
    <property type="entry name" value="CHARGED MULTIVESICULAR BODY PROTEIN"/>
    <property type="match status" value="1"/>
</dbReference>
<dbReference type="Pfam" id="PF03357">
    <property type="entry name" value="Snf7"/>
    <property type="match status" value="1"/>
</dbReference>
<gene>
    <name evidence="4" type="primary">CHMP1</name>
    <name evidence="6" type="ordered locus">Os06g0643300</name>
    <name evidence="4" type="ordered locus">LOC_Os06g43590</name>
    <name evidence="7" type="ORF">OsJ_22129</name>
    <name evidence="5" type="ORF">P0416A11.29</name>
</gene>
<reference key="1">
    <citation type="journal article" date="2003" name="Plant Mol. Biol.">
        <title>Identification of rice (Oryza sativa) proteins linked to the cyclin-mediated regulation of the cell cycle.</title>
        <authorList>
            <person name="Cooper B."/>
            <person name="Hutchison D."/>
            <person name="Park S."/>
            <person name="Guimil S."/>
            <person name="Luginbuehl P."/>
            <person name="Ellero C."/>
            <person name="Goff S.A."/>
            <person name="Glazebrook J."/>
        </authorList>
    </citation>
    <scope>NUCLEOTIDE SEQUENCE [MRNA]</scope>
    <source>
        <strain>cv. Nipponbare</strain>
    </source>
</reference>
<reference key="2">
    <citation type="journal article" date="2005" name="Nature">
        <title>The map-based sequence of the rice genome.</title>
        <authorList>
            <consortium name="International rice genome sequencing project (IRGSP)"/>
        </authorList>
    </citation>
    <scope>NUCLEOTIDE SEQUENCE [LARGE SCALE GENOMIC DNA]</scope>
    <source>
        <strain>cv. Nipponbare</strain>
    </source>
</reference>
<reference key="3">
    <citation type="journal article" date="2008" name="Nucleic Acids Res.">
        <title>The rice annotation project database (RAP-DB): 2008 update.</title>
        <authorList>
            <consortium name="The rice annotation project (RAP)"/>
        </authorList>
    </citation>
    <scope>GENOME REANNOTATION</scope>
    <source>
        <strain>cv. Nipponbare</strain>
    </source>
</reference>
<reference key="4">
    <citation type="journal article" date="2013" name="Rice">
        <title>Improvement of the Oryza sativa Nipponbare reference genome using next generation sequence and optical map data.</title>
        <authorList>
            <person name="Kawahara Y."/>
            <person name="de la Bastide M."/>
            <person name="Hamilton J.P."/>
            <person name="Kanamori H."/>
            <person name="McCombie W.R."/>
            <person name="Ouyang S."/>
            <person name="Schwartz D.C."/>
            <person name="Tanaka T."/>
            <person name="Wu J."/>
            <person name="Zhou S."/>
            <person name="Childs K.L."/>
            <person name="Davidson R.M."/>
            <person name="Lin H."/>
            <person name="Quesada-Ocampo L."/>
            <person name="Vaillancourt B."/>
            <person name="Sakai H."/>
            <person name="Lee S.S."/>
            <person name="Kim J."/>
            <person name="Numa H."/>
            <person name="Itoh T."/>
            <person name="Buell C.R."/>
            <person name="Matsumoto T."/>
        </authorList>
    </citation>
    <scope>GENOME REANNOTATION</scope>
    <source>
        <strain>cv. Nipponbare</strain>
    </source>
</reference>
<reference key="5">
    <citation type="journal article" date="2005" name="PLoS Biol.">
        <title>The genomes of Oryza sativa: a history of duplications.</title>
        <authorList>
            <person name="Yu J."/>
            <person name="Wang J."/>
            <person name="Lin W."/>
            <person name="Li S."/>
            <person name="Li H."/>
            <person name="Zhou J."/>
            <person name="Ni P."/>
            <person name="Dong W."/>
            <person name="Hu S."/>
            <person name="Zeng C."/>
            <person name="Zhang J."/>
            <person name="Zhang Y."/>
            <person name="Li R."/>
            <person name="Xu Z."/>
            <person name="Li S."/>
            <person name="Li X."/>
            <person name="Zheng H."/>
            <person name="Cong L."/>
            <person name="Lin L."/>
            <person name="Yin J."/>
            <person name="Geng J."/>
            <person name="Li G."/>
            <person name="Shi J."/>
            <person name="Liu J."/>
            <person name="Lv H."/>
            <person name="Li J."/>
            <person name="Wang J."/>
            <person name="Deng Y."/>
            <person name="Ran L."/>
            <person name="Shi X."/>
            <person name="Wang X."/>
            <person name="Wu Q."/>
            <person name="Li C."/>
            <person name="Ren X."/>
            <person name="Wang J."/>
            <person name="Wang X."/>
            <person name="Li D."/>
            <person name="Liu D."/>
            <person name="Zhang X."/>
            <person name="Ji Z."/>
            <person name="Zhao W."/>
            <person name="Sun Y."/>
            <person name="Zhang Z."/>
            <person name="Bao J."/>
            <person name="Han Y."/>
            <person name="Dong L."/>
            <person name="Ji J."/>
            <person name="Chen P."/>
            <person name="Wu S."/>
            <person name="Liu J."/>
            <person name="Xiao Y."/>
            <person name="Bu D."/>
            <person name="Tan J."/>
            <person name="Yang L."/>
            <person name="Ye C."/>
            <person name="Zhang J."/>
            <person name="Xu J."/>
            <person name="Zhou Y."/>
            <person name="Yu Y."/>
            <person name="Zhang B."/>
            <person name="Zhuang S."/>
            <person name="Wei H."/>
            <person name="Liu B."/>
            <person name="Lei M."/>
            <person name="Yu H."/>
            <person name="Li Y."/>
            <person name="Xu H."/>
            <person name="Wei S."/>
            <person name="He X."/>
            <person name="Fang L."/>
            <person name="Zhang Z."/>
            <person name="Zhang Y."/>
            <person name="Huang X."/>
            <person name="Su Z."/>
            <person name="Tong W."/>
            <person name="Li J."/>
            <person name="Tong Z."/>
            <person name="Li S."/>
            <person name="Ye J."/>
            <person name="Wang L."/>
            <person name="Fang L."/>
            <person name="Lei T."/>
            <person name="Chen C.-S."/>
            <person name="Chen H.-C."/>
            <person name="Xu Z."/>
            <person name="Li H."/>
            <person name="Huang H."/>
            <person name="Zhang F."/>
            <person name="Xu H."/>
            <person name="Li N."/>
            <person name="Zhao C."/>
            <person name="Li S."/>
            <person name="Dong L."/>
            <person name="Huang Y."/>
            <person name="Li L."/>
            <person name="Xi Y."/>
            <person name="Qi Q."/>
            <person name="Li W."/>
            <person name="Zhang B."/>
            <person name="Hu W."/>
            <person name="Zhang Y."/>
            <person name="Tian X."/>
            <person name="Jiao Y."/>
            <person name="Liang X."/>
            <person name="Jin J."/>
            <person name="Gao L."/>
            <person name="Zheng W."/>
            <person name="Hao B."/>
            <person name="Liu S.-M."/>
            <person name="Wang W."/>
            <person name="Yuan L."/>
            <person name="Cao M."/>
            <person name="McDermott J."/>
            <person name="Samudrala R."/>
            <person name="Wang J."/>
            <person name="Wong G.K.-S."/>
            <person name="Yang H."/>
        </authorList>
    </citation>
    <scope>NUCLEOTIDE SEQUENCE [LARGE SCALE GENOMIC DNA]</scope>
    <source>
        <strain>cv. Nipponbare</strain>
    </source>
</reference>
<reference key="6">
    <citation type="journal article" date="2003" name="Science">
        <title>Collection, mapping, and annotation of over 28,000 cDNA clones from japonica rice.</title>
        <authorList>
            <consortium name="The rice full-length cDNA consortium"/>
        </authorList>
    </citation>
    <scope>NUCLEOTIDE SEQUENCE [LARGE SCALE MRNA]</scope>
    <source>
        <strain>cv. Nipponbare</strain>
    </source>
</reference>
<sequence>MGNPEKLMTQIFDLKFTSKSLQRQARKCEKEEKEQKLKVKKAIEKGNMDGARIYAENAIRKRTEHMNYLRLASRLDAVVARLDTQAKMQVIGKSMANIVKSLDSALATGNLQKMSETMDNFERQFVNMEVQAEFMEGAMAGSTSLSTPETEVNSLMQQVADDYGLEVSVGLPQAAAHAIPAAKEKEKAVDEDDLSRRLAELKARG</sequence>
<evidence type="ECO:0000250" key="1">
    <source>
        <dbReference type="UniProtKB" id="Q8LE58"/>
    </source>
</evidence>
<evidence type="ECO:0000250" key="2">
    <source>
        <dbReference type="UniProtKB" id="Q9HD42"/>
    </source>
</evidence>
<evidence type="ECO:0000255" key="3"/>
<evidence type="ECO:0000305" key="4"/>
<evidence type="ECO:0000312" key="5">
    <source>
        <dbReference type="EMBL" id="BAD37367.1"/>
    </source>
</evidence>
<evidence type="ECO:0000312" key="6">
    <source>
        <dbReference type="EMBL" id="BAF20091.1"/>
    </source>
</evidence>
<evidence type="ECO:0000312" key="7">
    <source>
        <dbReference type="EMBL" id="EAZ37793.1"/>
    </source>
</evidence>
<organism>
    <name type="scientific">Oryza sativa subsp. japonica</name>
    <name type="common">Rice</name>
    <dbReference type="NCBI Taxonomy" id="39947"/>
    <lineage>
        <taxon>Eukaryota</taxon>
        <taxon>Viridiplantae</taxon>
        <taxon>Streptophyta</taxon>
        <taxon>Embryophyta</taxon>
        <taxon>Tracheophyta</taxon>
        <taxon>Spermatophyta</taxon>
        <taxon>Magnoliopsida</taxon>
        <taxon>Liliopsida</taxon>
        <taxon>Poales</taxon>
        <taxon>Poaceae</taxon>
        <taxon>BOP clade</taxon>
        <taxon>Oryzoideae</taxon>
        <taxon>Oryzeae</taxon>
        <taxon>Oryzinae</taxon>
        <taxon>Oryza</taxon>
        <taxon>Oryza sativa</taxon>
    </lineage>
</organism>